<protein>
    <recommendedName>
        <fullName>Cystatin-11</fullName>
    </recommendedName>
    <alternativeName>
        <fullName evidence="6">Cystatin-E1</fullName>
    </alternativeName>
    <alternativeName>
        <fullName evidence="6">Cystatin-related epididymal spermatogenic protein 2</fullName>
    </alternativeName>
</protein>
<feature type="signal peptide" evidence="3">
    <location>
        <begin position="1"/>
        <end position="28"/>
    </location>
</feature>
<feature type="chain" id="PRO_0000006659" description="Cystatin-11">
    <location>
        <begin position="29"/>
        <end position="139"/>
    </location>
</feature>
<feature type="glycosylation site" description="N-linked (GlcNAc...) asparagine" evidence="3">
    <location>
        <position position="134"/>
    </location>
</feature>
<feature type="disulfide bond" evidence="1">
    <location>
        <begin position="94"/>
        <end position="102"/>
    </location>
</feature>
<feature type="disulfide bond" evidence="1">
    <location>
        <begin position="115"/>
        <end position="135"/>
    </location>
</feature>
<keyword id="KW-1015">Disulfide bond</keyword>
<keyword id="KW-0325">Glycoprotein</keyword>
<keyword id="KW-0646">Protease inhibitor</keyword>
<keyword id="KW-1185">Reference proteome</keyword>
<keyword id="KW-0964">Secreted</keyword>
<keyword id="KW-0732">Signal</keyword>
<keyword id="KW-0789">Thiol protease inhibitor</keyword>
<dbReference type="EMBL" id="BK001265">
    <property type="protein sequence ID" value="DAA01199.1"/>
    <property type="molecule type" value="mRNA"/>
</dbReference>
<dbReference type="EMBL" id="AF454373">
    <property type="protein sequence ID" value="AAL51004.1"/>
    <property type="molecule type" value="mRNA"/>
</dbReference>
<dbReference type="EMBL" id="AK020300">
    <property type="protein sequence ID" value="BAB32061.1"/>
    <property type="molecule type" value="mRNA"/>
</dbReference>
<dbReference type="EMBL" id="BC100526">
    <property type="protein sequence ID" value="AAI00527.1"/>
    <property type="molecule type" value="mRNA"/>
</dbReference>
<dbReference type="CCDS" id="CCDS16845.1"/>
<dbReference type="RefSeq" id="NP_084335.1">
    <property type="nucleotide sequence ID" value="NM_030059.2"/>
</dbReference>
<dbReference type="SMR" id="Q9D269"/>
<dbReference type="BioGRID" id="219272">
    <property type="interactions" value="1"/>
</dbReference>
<dbReference type="FunCoup" id="Q9D269">
    <property type="interactions" value="39"/>
</dbReference>
<dbReference type="STRING" id="10090.ENSMUSP00000028934"/>
<dbReference type="GlyCosmos" id="Q9D269">
    <property type="glycosylation" value="1 site, No reported glycans"/>
</dbReference>
<dbReference type="GlyGen" id="Q9D269">
    <property type="glycosylation" value="1 site"/>
</dbReference>
<dbReference type="PhosphoSitePlus" id="Q9D269"/>
<dbReference type="PaxDb" id="10090-ENSMUSP00000028934"/>
<dbReference type="ProteomicsDB" id="283966"/>
<dbReference type="Antibodypedia" id="54198">
    <property type="antibodies" value="82 antibodies from 17 providers"/>
</dbReference>
<dbReference type="DNASU" id="78240"/>
<dbReference type="Ensembl" id="ENSMUST00000028934.3">
    <property type="protein sequence ID" value="ENSMUSP00000028934.3"/>
    <property type="gene ID" value="ENSMUSG00000036958.6"/>
</dbReference>
<dbReference type="GeneID" id="78240"/>
<dbReference type="KEGG" id="mmu:78240"/>
<dbReference type="UCSC" id="uc008mtl.1">
    <property type="organism name" value="mouse"/>
</dbReference>
<dbReference type="AGR" id="MGI:1925490"/>
<dbReference type="CTD" id="140880"/>
<dbReference type="MGI" id="MGI:1925490">
    <property type="gene designation" value="Cst11"/>
</dbReference>
<dbReference type="VEuPathDB" id="HostDB:ENSMUSG00000036958"/>
<dbReference type="eggNOG" id="ENOG502RWFM">
    <property type="taxonomic scope" value="Eukaryota"/>
</dbReference>
<dbReference type="GeneTree" id="ENSGT00910000144356"/>
<dbReference type="HOGENOM" id="CLU_118168_2_1_1"/>
<dbReference type="InParanoid" id="Q9D269"/>
<dbReference type="OMA" id="NCVPQEG"/>
<dbReference type="OrthoDB" id="1908104at2759"/>
<dbReference type="PhylomeDB" id="Q9D269"/>
<dbReference type="BioGRID-ORCS" id="78240">
    <property type="hits" value="1 hit in 76 CRISPR screens"/>
</dbReference>
<dbReference type="PRO" id="PR:Q9D269"/>
<dbReference type="Proteomes" id="UP000000589">
    <property type="component" value="Chromosome 2"/>
</dbReference>
<dbReference type="RNAct" id="Q9D269">
    <property type="molecule type" value="protein"/>
</dbReference>
<dbReference type="Bgee" id="ENSMUSG00000036958">
    <property type="expression patterns" value="Expressed in mesodermal cell in embryo and 9 other cell types or tissues"/>
</dbReference>
<dbReference type="GO" id="GO:0005737">
    <property type="term" value="C:cytoplasm"/>
    <property type="evidence" value="ECO:0000250"/>
    <property type="project" value="UniProtKB"/>
</dbReference>
<dbReference type="GO" id="GO:0005576">
    <property type="term" value="C:extracellular region"/>
    <property type="evidence" value="ECO:0007669"/>
    <property type="project" value="UniProtKB-SubCell"/>
</dbReference>
<dbReference type="GO" id="GO:0005634">
    <property type="term" value="C:nucleus"/>
    <property type="evidence" value="ECO:0000250"/>
    <property type="project" value="UniProtKB"/>
</dbReference>
<dbReference type="GO" id="GO:0036126">
    <property type="term" value="C:sperm flagellum"/>
    <property type="evidence" value="ECO:0000250"/>
    <property type="project" value="UniProtKB"/>
</dbReference>
<dbReference type="GO" id="GO:0061827">
    <property type="term" value="C:sperm head"/>
    <property type="evidence" value="ECO:0000250"/>
    <property type="project" value="UniProtKB"/>
</dbReference>
<dbReference type="GO" id="GO:0004869">
    <property type="term" value="F:cysteine-type endopeptidase inhibitor activity"/>
    <property type="evidence" value="ECO:0007669"/>
    <property type="project" value="UniProtKB-KW"/>
</dbReference>
<dbReference type="GO" id="GO:0030521">
    <property type="term" value="P:androgen receptor signaling pathway"/>
    <property type="evidence" value="ECO:0000250"/>
    <property type="project" value="UniProtKB"/>
</dbReference>
<dbReference type="GO" id="GO:0050829">
    <property type="term" value="P:defense response to Gram-negative bacterium"/>
    <property type="evidence" value="ECO:0000250"/>
    <property type="project" value="UniProtKB"/>
</dbReference>
<dbReference type="GO" id="GO:0031640">
    <property type="term" value="P:killing of cells of another organism"/>
    <property type="evidence" value="ECO:0000250"/>
    <property type="project" value="UniProtKB"/>
</dbReference>
<dbReference type="CDD" id="cd00042">
    <property type="entry name" value="CY"/>
    <property type="match status" value="1"/>
</dbReference>
<dbReference type="FunFam" id="3.10.450.10:FF:000019">
    <property type="entry name" value="Cystatin 11"/>
    <property type="match status" value="1"/>
</dbReference>
<dbReference type="Gene3D" id="3.10.450.10">
    <property type="match status" value="1"/>
</dbReference>
<dbReference type="InterPro" id="IPR042930">
    <property type="entry name" value="CST11"/>
</dbReference>
<dbReference type="InterPro" id="IPR000010">
    <property type="entry name" value="Cystatin_dom"/>
</dbReference>
<dbReference type="InterPro" id="IPR046350">
    <property type="entry name" value="Cystatin_sf"/>
</dbReference>
<dbReference type="PANTHER" id="PTHR47886">
    <property type="entry name" value="CYSTATIN-11"/>
    <property type="match status" value="1"/>
</dbReference>
<dbReference type="PANTHER" id="PTHR47886:SF1">
    <property type="entry name" value="CYSTATIN-11"/>
    <property type="match status" value="1"/>
</dbReference>
<dbReference type="Pfam" id="PF00031">
    <property type="entry name" value="Cystatin"/>
    <property type="match status" value="1"/>
</dbReference>
<dbReference type="SMART" id="SM00043">
    <property type="entry name" value="CY"/>
    <property type="match status" value="1"/>
</dbReference>
<dbReference type="SUPFAM" id="SSF54403">
    <property type="entry name" value="Cystatin/monellin"/>
    <property type="match status" value="1"/>
</dbReference>
<name>CST11_MOUSE</name>
<evidence type="ECO:0000250" key="1">
    <source>
        <dbReference type="UniProtKB" id="O76096"/>
    </source>
</evidence>
<evidence type="ECO:0000250" key="2">
    <source>
        <dbReference type="UniProtKB" id="Q9H112"/>
    </source>
</evidence>
<evidence type="ECO:0000255" key="3"/>
<evidence type="ECO:0000269" key="4">
    <source>
    </source>
</evidence>
<evidence type="ECO:0000269" key="5">
    <source>
    </source>
</evidence>
<evidence type="ECO:0000303" key="6">
    <source>
    </source>
</evidence>
<evidence type="ECO:0000303" key="7">
    <source>
    </source>
</evidence>
<evidence type="ECO:0000305" key="8"/>
<evidence type="ECO:0000312" key="9">
    <source>
        <dbReference type="EMBL" id="AAI00527.1"/>
    </source>
</evidence>
<evidence type="ECO:0000312" key="10">
    <source>
        <dbReference type="EMBL" id="AAL51004.1"/>
    </source>
</evidence>
<evidence type="ECO:0000312" key="11">
    <source>
        <dbReference type="EMBL" id="DAA01199.1"/>
    </source>
</evidence>
<evidence type="ECO:0000312" key="12">
    <source>
        <dbReference type="MGI" id="MGI:1925490"/>
    </source>
</evidence>
<comment type="function">
    <text evidence="2">Has antibacterial activity against the Gram-negative bacteria E.coli. May play a role in sperm maturation and fertilization.</text>
</comment>
<comment type="subcellular location">
    <subcellularLocation>
        <location evidence="2">Secreted</location>
    </subcellularLocation>
    <text evidence="2">Probably secreted into the epididymis lumen, where it localizes to the outer surface of sperm. Specifically localizes to the postacrosomal and tail regions of sperm.</text>
</comment>
<comment type="tissue specificity">
    <text evidence="4 5">Expressed in epididymis, where it localizes to the proximal caput and also part of the midcaput. Not detected in other tissues tested.</text>
</comment>
<comment type="induction">
    <text evidence="4 5">Up-regulated by testicular factors. However, does not seem to be directly regulated by androgens or estrogen.</text>
</comment>
<comment type="similarity">
    <text evidence="8">Belongs to the cystatin family.</text>
</comment>
<proteinExistence type="evidence at transcript level"/>
<reference key="1">
    <citation type="journal article" date="2003" name="Biol. Reprod.">
        <title>Cystatin E1 and E2, new members of male reproductive tract subgroup within cystatin type 2 family.</title>
        <authorList>
            <person name="Li Y."/>
            <person name="Friel P.J."/>
            <person name="McLean D.J."/>
            <person name="Griswold M.D."/>
        </authorList>
    </citation>
    <scope>NUCLEOTIDE SEQUENCE [MRNA]</scope>
    <scope>TISSUE SPECIFICITY</scope>
    <scope>INDUCTION</scope>
    <source>
        <strain evidence="11">C57BL/6J</strain>
        <tissue evidence="11">Epididymis</tissue>
    </source>
</reference>
<reference key="2">
    <citation type="journal article" date="2003" name="Endocrinology">
        <title>Cres2 and Cres3: new members of the cystatin-related epididymal spermatogenic subgroup of family 2 cystatins.</title>
        <authorList>
            <person name="Hsia N."/>
            <person name="Cornwall G.A."/>
        </authorList>
    </citation>
    <scope>NUCLEOTIDE SEQUENCE [MRNA]</scope>
    <scope>TISSUE SPECIFICITY</scope>
    <scope>INDUCTION</scope>
    <source>
        <strain evidence="10">ICR</strain>
        <tissue evidence="10">Epididymis</tissue>
    </source>
</reference>
<reference key="3">
    <citation type="journal article" date="2005" name="Science">
        <title>The transcriptional landscape of the mammalian genome.</title>
        <authorList>
            <person name="Carninci P."/>
            <person name="Kasukawa T."/>
            <person name="Katayama S."/>
            <person name="Gough J."/>
            <person name="Frith M.C."/>
            <person name="Maeda N."/>
            <person name="Oyama R."/>
            <person name="Ravasi T."/>
            <person name="Lenhard B."/>
            <person name="Wells C."/>
            <person name="Kodzius R."/>
            <person name="Shimokawa K."/>
            <person name="Bajic V.B."/>
            <person name="Brenner S.E."/>
            <person name="Batalov S."/>
            <person name="Forrest A.R."/>
            <person name="Zavolan M."/>
            <person name="Davis M.J."/>
            <person name="Wilming L.G."/>
            <person name="Aidinis V."/>
            <person name="Allen J.E."/>
            <person name="Ambesi-Impiombato A."/>
            <person name="Apweiler R."/>
            <person name="Aturaliya R.N."/>
            <person name="Bailey T.L."/>
            <person name="Bansal M."/>
            <person name="Baxter L."/>
            <person name="Beisel K.W."/>
            <person name="Bersano T."/>
            <person name="Bono H."/>
            <person name="Chalk A.M."/>
            <person name="Chiu K.P."/>
            <person name="Choudhary V."/>
            <person name="Christoffels A."/>
            <person name="Clutterbuck D.R."/>
            <person name="Crowe M.L."/>
            <person name="Dalla E."/>
            <person name="Dalrymple B.P."/>
            <person name="de Bono B."/>
            <person name="Della Gatta G."/>
            <person name="di Bernardo D."/>
            <person name="Down T."/>
            <person name="Engstrom P."/>
            <person name="Fagiolini M."/>
            <person name="Faulkner G."/>
            <person name="Fletcher C.F."/>
            <person name="Fukushima T."/>
            <person name="Furuno M."/>
            <person name="Futaki S."/>
            <person name="Gariboldi M."/>
            <person name="Georgii-Hemming P."/>
            <person name="Gingeras T.R."/>
            <person name="Gojobori T."/>
            <person name="Green R.E."/>
            <person name="Gustincich S."/>
            <person name="Harbers M."/>
            <person name="Hayashi Y."/>
            <person name="Hensch T.K."/>
            <person name="Hirokawa N."/>
            <person name="Hill D."/>
            <person name="Huminiecki L."/>
            <person name="Iacono M."/>
            <person name="Ikeo K."/>
            <person name="Iwama A."/>
            <person name="Ishikawa T."/>
            <person name="Jakt M."/>
            <person name="Kanapin A."/>
            <person name="Katoh M."/>
            <person name="Kawasawa Y."/>
            <person name="Kelso J."/>
            <person name="Kitamura H."/>
            <person name="Kitano H."/>
            <person name="Kollias G."/>
            <person name="Krishnan S.P."/>
            <person name="Kruger A."/>
            <person name="Kummerfeld S.K."/>
            <person name="Kurochkin I.V."/>
            <person name="Lareau L.F."/>
            <person name="Lazarevic D."/>
            <person name="Lipovich L."/>
            <person name="Liu J."/>
            <person name="Liuni S."/>
            <person name="McWilliam S."/>
            <person name="Madan Babu M."/>
            <person name="Madera M."/>
            <person name="Marchionni L."/>
            <person name="Matsuda H."/>
            <person name="Matsuzawa S."/>
            <person name="Miki H."/>
            <person name="Mignone F."/>
            <person name="Miyake S."/>
            <person name="Morris K."/>
            <person name="Mottagui-Tabar S."/>
            <person name="Mulder N."/>
            <person name="Nakano N."/>
            <person name="Nakauchi H."/>
            <person name="Ng P."/>
            <person name="Nilsson R."/>
            <person name="Nishiguchi S."/>
            <person name="Nishikawa S."/>
            <person name="Nori F."/>
            <person name="Ohara O."/>
            <person name="Okazaki Y."/>
            <person name="Orlando V."/>
            <person name="Pang K.C."/>
            <person name="Pavan W.J."/>
            <person name="Pavesi G."/>
            <person name="Pesole G."/>
            <person name="Petrovsky N."/>
            <person name="Piazza S."/>
            <person name="Reed J."/>
            <person name="Reid J.F."/>
            <person name="Ring B.Z."/>
            <person name="Ringwald M."/>
            <person name="Rost B."/>
            <person name="Ruan Y."/>
            <person name="Salzberg S.L."/>
            <person name="Sandelin A."/>
            <person name="Schneider C."/>
            <person name="Schoenbach C."/>
            <person name="Sekiguchi K."/>
            <person name="Semple C.A."/>
            <person name="Seno S."/>
            <person name="Sessa L."/>
            <person name="Sheng Y."/>
            <person name="Shibata Y."/>
            <person name="Shimada H."/>
            <person name="Shimada K."/>
            <person name="Silva D."/>
            <person name="Sinclair B."/>
            <person name="Sperling S."/>
            <person name="Stupka E."/>
            <person name="Sugiura K."/>
            <person name="Sultana R."/>
            <person name="Takenaka Y."/>
            <person name="Taki K."/>
            <person name="Tammoja K."/>
            <person name="Tan S.L."/>
            <person name="Tang S."/>
            <person name="Taylor M.S."/>
            <person name="Tegner J."/>
            <person name="Teichmann S.A."/>
            <person name="Ueda H.R."/>
            <person name="van Nimwegen E."/>
            <person name="Verardo R."/>
            <person name="Wei C.L."/>
            <person name="Yagi K."/>
            <person name="Yamanishi H."/>
            <person name="Zabarovsky E."/>
            <person name="Zhu S."/>
            <person name="Zimmer A."/>
            <person name="Hide W."/>
            <person name="Bult C."/>
            <person name="Grimmond S.M."/>
            <person name="Teasdale R.D."/>
            <person name="Liu E.T."/>
            <person name="Brusic V."/>
            <person name="Quackenbush J."/>
            <person name="Wahlestedt C."/>
            <person name="Mattick J.S."/>
            <person name="Hume D.A."/>
            <person name="Kai C."/>
            <person name="Sasaki D."/>
            <person name="Tomaru Y."/>
            <person name="Fukuda S."/>
            <person name="Kanamori-Katayama M."/>
            <person name="Suzuki M."/>
            <person name="Aoki J."/>
            <person name="Arakawa T."/>
            <person name="Iida J."/>
            <person name="Imamura K."/>
            <person name="Itoh M."/>
            <person name="Kato T."/>
            <person name="Kawaji H."/>
            <person name="Kawagashira N."/>
            <person name="Kawashima T."/>
            <person name="Kojima M."/>
            <person name="Kondo S."/>
            <person name="Konno H."/>
            <person name="Nakano K."/>
            <person name="Ninomiya N."/>
            <person name="Nishio T."/>
            <person name="Okada M."/>
            <person name="Plessy C."/>
            <person name="Shibata K."/>
            <person name="Shiraki T."/>
            <person name="Suzuki S."/>
            <person name="Tagami M."/>
            <person name="Waki K."/>
            <person name="Watahiki A."/>
            <person name="Okamura-Oho Y."/>
            <person name="Suzuki H."/>
            <person name="Kawai J."/>
            <person name="Hayashizaki Y."/>
        </authorList>
    </citation>
    <scope>NUCLEOTIDE SEQUENCE [LARGE SCALE MRNA]</scope>
    <source>
        <strain>C57BL/6J</strain>
        <tissue>Epididymis</tissue>
    </source>
</reference>
<reference key="4">
    <citation type="journal article" date="2004" name="Genome Res.">
        <title>The status, quality, and expansion of the NIH full-length cDNA project: the Mammalian Gene Collection (MGC).</title>
        <authorList>
            <consortium name="The MGC Project Team"/>
        </authorList>
    </citation>
    <scope>NUCLEOTIDE SEQUENCE [LARGE SCALE MRNA]</scope>
    <source>
        <tissue evidence="9">Testis</tissue>
    </source>
</reference>
<accession>Q9D269</accession>
<accession>Q7M731</accession>
<organism>
    <name type="scientific">Mus musculus</name>
    <name type="common">Mouse</name>
    <dbReference type="NCBI Taxonomy" id="10090"/>
    <lineage>
        <taxon>Eukaryota</taxon>
        <taxon>Metazoa</taxon>
        <taxon>Chordata</taxon>
        <taxon>Craniata</taxon>
        <taxon>Vertebrata</taxon>
        <taxon>Euteleostomi</taxon>
        <taxon>Mammalia</taxon>
        <taxon>Eutheria</taxon>
        <taxon>Euarchontoglires</taxon>
        <taxon>Glires</taxon>
        <taxon>Rodentia</taxon>
        <taxon>Myomorpha</taxon>
        <taxon>Muroidea</taxon>
        <taxon>Muridae</taxon>
        <taxon>Murinae</taxon>
        <taxon>Mus</taxon>
        <taxon>Mus</taxon>
    </lineage>
</organism>
<gene>
    <name evidence="12" type="primary">Cst11</name>
    <name evidence="6" type="synonym">Cres2</name>
    <name evidence="7" type="synonym">CSTE1</name>
</gene>
<sequence length="139" mass="16217">MAAGSWKATRLLLAILVALVAFSYQVKRKTFIRIEEVSALESSVKETLEYVTDEYNKKSEDLYNFRILRILKIMKQVTGHLEYHITVEMQRTTCLKTETSLCDIQKGELHKKIQCYFSVYAIPWVEVFKILKKNCTDIS</sequence>